<gene>
    <name evidence="1" type="primary">lpxA</name>
    <name type="ordered locus">Smlt1495</name>
</gene>
<keyword id="KW-0012">Acyltransferase</keyword>
<keyword id="KW-0963">Cytoplasm</keyword>
<keyword id="KW-0441">Lipid A biosynthesis</keyword>
<keyword id="KW-0444">Lipid biosynthesis</keyword>
<keyword id="KW-0443">Lipid metabolism</keyword>
<keyword id="KW-1185">Reference proteome</keyword>
<keyword id="KW-0677">Repeat</keyword>
<keyword id="KW-0808">Transferase</keyword>
<reference key="1">
    <citation type="journal article" date="2008" name="Genome Biol.">
        <title>The complete genome, comparative and functional analysis of Stenotrophomonas maltophilia reveals an organism heavily shielded by drug resistance determinants.</title>
        <authorList>
            <person name="Crossman L.C."/>
            <person name="Gould V.C."/>
            <person name="Dow J.M."/>
            <person name="Vernikos G.S."/>
            <person name="Okazaki A."/>
            <person name="Sebaihia M."/>
            <person name="Saunders D."/>
            <person name="Arrowsmith C."/>
            <person name="Carver T."/>
            <person name="Peters N."/>
            <person name="Adlem E."/>
            <person name="Kerhornou A."/>
            <person name="Lord A."/>
            <person name="Murphy L."/>
            <person name="Seeger K."/>
            <person name="Squares R."/>
            <person name="Rutter S."/>
            <person name="Quail M.A."/>
            <person name="Rajandream M.A."/>
            <person name="Harris D."/>
            <person name="Churcher C."/>
            <person name="Bentley S.D."/>
            <person name="Parkhill J."/>
            <person name="Thomson N.R."/>
            <person name="Avison M.B."/>
        </authorList>
    </citation>
    <scope>NUCLEOTIDE SEQUENCE [LARGE SCALE GENOMIC DNA]</scope>
    <source>
        <strain>K279a</strain>
    </source>
</reference>
<evidence type="ECO:0000255" key="1">
    <source>
        <dbReference type="HAMAP-Rule" id="MF_00387"/>
    </source>
</evidence>
<dbReference type="EC" id="2.3.1.129" evidence="1"/>
<dbReference type="EMBL" id="AM743169">
    <property type="protein sequence ID" value="CAQ45031.1"/>
    <property type="molecule type" value="Genomic_DNA"/>
</dbReference>
<dbReference type="RefSeq" id="WP_005412736.1">
    <property type="nucleotide sequence ID" value="NC_010943.1"/>
</dbReference>
<dbReference type="SMR" id="B2FHN6"/>
<dbReference type="EnsemblBacteria" id="CAQ45031">
    <property type="protein sequence ID" value="CAQ45031"/>
    <property type="gene ID" value="Smlt1495"/>
</dbReference>
<dbReference type="KEGG" id="sml:Smlt1495"/>
<dbReference type="eggNOG" id="COG1043">
    <property type="taxonomic scope" value="Bacteria"/>
</dbReference>
<dbReference type="HOGENOM" id="CLU_061249_0_0_6"/>
<dbReference type="UniPathway" id="UPA00359">
    <property type="reaction ID" value="UER00477"/>
</dbReference>
<dbReference type="Proteomes" id="UP000008840">
    <property type="component" value="Chromosome"/>
</dbReference>
<dbReference type="GO" id="GO:0005737">
    <property type="term" value="C:cytoplasm"/>
    <property type="evidence" value="ECO:0007669"/>
    <property type="project" value="UniProtKB-SubCell"/>
</dbReference>
<dbReference type="GO" id="GO:0016020">
    <property type="term" value="C:membrane"/>
    <property type="evidence" value="ECO:0007669"/>
    <property type="project" value="GOC"/>
</dbReference>
<dbReference type="GO" id="GO:0008780">
    <property type="term" value="F:acyl-[acyl-carrier-protein]-UDP-N-acetylglucosamine O-acyltransferase activity"/>
    <property type="evidence" value="ECO:0007669"/>
    <property type="project" value="UniProtKB-UniRule"/>
</dbReference>
<dbReference type="GO" id="GO:0009245">
    <property type="term" value="P:lipid A biosynthetic process"/>
    <property type="evidence" value="ECO:0007669"/>
    <property type="project" value="UniProtKB-UniRule"/>
</dbReference>
<dbReference type="CDD" id="cd03351">
    <property type="entry name" value="LbH_UDP-GlcNAc_AT"/>
    <property type="match status" value="1"/>
</dbReference>
<dbReference type="Gene3D" id="2.160.10.10">
    <property type="entry name" value="Hexapeptide repeat proteins"/>
    <property type="match status" value="1"/>
</dbReference>
<dbReference type="Gene3D" id="1.20.1180.10">
    <property type="entry name" value="Udp N-acetylglucosamine O-acyltransferase, C-terminal domain"/>
    <property type="match status" value="1"/>
</dbReference>
<dbReference type="HAMAP" id="MF_00387">
    <property type="entry name" value="LpxA"/>
    <property type="match status" value="1"/>
</dbReference>
<dbReference type="InterPro" id="IPR029098">
    <property type="entry name" value="Acetyltransf_C"/>
</dbReference>
<dbReference type="InterPro" id="IPR037157">
    <property type="entry name" value="Acetyltransf_C_sf"/>
</dbReference>
<dbReference type="InterPro" id="IPR001451">
    <property type="entry name" value="Hexapep"/>
</dbReference>
<dbReference type="InterPro" id="IPR010137">
    <property type="entry name" value="Lipid_A_LpxA"/>
</dbReference>
<dbReference type="InterPro" id="IPR011004">
    <property type="entry name" value="Trimer_LpxA-like_sf"/>
</dbReference>
<dbReference type="NCBIfam" id="TIGR01852">
    <property type="entry name" value="lipid_A_lpxA"/>
    <property type="match status" value="1"/>
</dbReference>
<dbReference type="NCBIfam" id="NF003657">
    <property type="entry name" value="PRK05289.1"/>
    <property type="match status" value="1"/>
</dbReference>
<dbReference type="PANTHER" id="PTHR43480">
    <property type="entry name" value="ACYL-[ACYL-CARRIER-PROTEIN]--UDP-N-ACETYLGLUCOSAMINE O-ACYLTRANSFERASE"/>
    <property type="match status" value="1"/>
</dbReference>
<dbReference type="PANTHER" id="PTHR43480:SF1">
    <property type="entry name" value="ACYL-[ACYL-CARRIER-PROTEIN]--UDP-N-ACETYLGLUCOSAMINE O-ACYLTRANSFERASE, MITOCHONDRIAL-RELATED"/>
    <property type="match status" value="1"/>
</dbReference>
<dbReference type="Pfam" id="PF13720">
    <property type="entry name" value="Acetyltransf_11"/>
    <property type="match status" value="1"/>
</dbReference>
<dbReference type="Pfam" id="PF00132">
    <property type="entry name" value="Hexapep"/>
    <property type="match status" value="1"/>
</dbReference>
<dbReference type="PIRSF" id="PIRSF000456">
    <property type="entry name" value="UDP-GlcNAc_acltr"/>
    <property type="match status" value="1"/>
</dbReference>
<dbReference type="SUPFAM" id="SSF51161">
    <property type="entry name" value="Trimeric LpxA-like enzymes"/>
    <property type="match status" value="1"/>
</dbReference>
<protein>
    <recommendedName>
        <fullName evidence="1">Acyl-[acyl-carrier-protein]--UDP-N-acetylglucosamine O-acyltransferase</fullName>
        <shortName evidence="1">UDP-N-acetylglucosamine acyltransferase</shortName>
        <ecNumber evidence="1">2.3.1.129</ecNumber>
    </recommendedName>
</protein>
<sequence>MTDNAPRIHPTAVIDPAARLADDVQVGAFTLIGADVEIGAGTVVGPHCSIHGPTRIGRDNRFIGHAAIGGEPQDKKFAGERTELVIGDRNVFREFVTLNRGTGGGGGITTIGNDNWMLAYTHVAHDCHVGNFCVFSNNTTLAGHVTVGDYVIISGFAGAHQFCRIGAHAFLGMGALTNGDVPPFTMVGTDSLGRPRGINSEGLKRRGFDAERISAIKRAYRTLYVAGLPLAEAKVQLTEQARDSDDVKAMLDFIEHAERPLLR</sequence>
<name>LPXA_STRMK</name>
<accession>B2FHN6</accession>
<organism>
    <name type="scientific">Stenotrophomonas maltophilia (strain K279a)</name>
    <dbReference type="NCBI Taxonomy" id="522373"/>
    <lineage>
        <taxon>Bacteria</taxon>
        <taxon>Pseudomonadati</taxon>
        <taxon>Pseudomonadota</taxon>
        <taxon>Gammaproteobacteria</taxon>
        <taxon>Lysobacterales</taxon>
        <taxon>Lysobacteraceae</taxon>
        <taxon>Stenotrophomonas</taxon>
        <taxon>Stenotrophomonas maltophilia group</taxon>
    </lineage>
</organism>
<comment type="function">
    <text evidence="1">Involved in the biosynthesis of lipid A, a phosphorylated glycolipid that anchors the lipopolysaccharide to the outer membrane of the cell.</text>
</comment>
<comment type="catalytic activity">
    <reaction evidence="1">
        <text>a (3R)-hydroxyacyl-[ACP] + UDP-N-acetyl-alpha-D-glucosamine = a UDP-3-O-[(3R)-3-hydroxyacyl]-N-acetyl-alpha-D-glucosamine + holo-[ACP]</text>
        <dbReference type="Rhea" id="RHEA:67812"/>
        <dbReference type="Rhea" id="RHEA-COMP:9685"/>
        <dbReference type="Rhea" id="RHEA-COMP:9945"/>
        <dbReference type="ChEBI" id="CHEBI:57705"/>
        <dbReference type="ChEBI" id="CHEBI:64479"/>
        <dbReference type="ChEBI" id="CHEBI:78827"/>
        <dbReference type="ChEBI" id="CHEBI:173225"/>
        <dbReference type="EC" id="2.3.1.129"/>
    </reaction>
</comment>
<comment type="pathway">
    <text evidence="1">Glycolipid biosynthesis; lipid IV(A) biosynthesis; lipid IV(A) from (3R)-3-hydroxytetradecanoyl-[acyl-carrier-protein] and UDP-N-acetyl-alpha-D-glucosamine: step 1/6.</text>
</comment>
<comment type="subunit">
    <text evidence="1">Homotrimer.</text>
</comment>
<comment type="subcellular location">
    <subcellularLocation>
        <location evidence="1">Cytoplasm</location>
    </subcellularLocation>
</comment>
<comment type="similarity">
    <text evidence="1">Belongs to the transferase hexapeptide repeat family. LpxA subfamily.</text>
</comment>
<feature type="chain" id="PRO_1000122736" description="Acyl-[acyl-carrier-protein]--UDP-N-acetylglucosamine O-acyltransferase">
    <location>
        <begin position="1"/>
        <end position="263"/>
    </location>
</feature>
<proteinExistence type="inferred from homology"/>